<gene>
    <name evidence="1" type="primary">bioF</name>
    <name type="ordered locus">BMA10247_2271</name>
</gene>
<proteinExistence type="inferred from homology"/>
<reference key="1">
    <citation type="journal article" date="2010" name="Genome Biol. Evol.">
        <title>Continuing evolution of Burkholderia mallei through genome reduction and large-scale rearrangements.</title>
        <authorList>
            <person name="Losada L."/>
            <person name="Ronning C.M."/>
            <person name="DeShazer D."/>
            <person name="Woods D."/>
            <person name="Fedorova N."/>
            <person name="Kim H.S."/>
            <person name="Shabalina S.A."/>
            <person name="Pearson T.R."/>
            <person name="Brinkac L."/>
            <person name="Tan P."/>
            <person name="Nandi T."/>
            <person name="Crabtree J."/>
            <person name="Badger J."/>
            <person name="Beckstrom-Sternberg S."/>
            <person name="Saqib M."/>
            <person name="Schutzer S.E."/>
            <person name="Keim P."/>
            <person name="Nierman W.C."/>
        </authorList>
    </citation>
    <scope>NUCLEOTIDE SEQUENCE [LARGE SCALE GENOMIC DNA]</scope>
    <source>
        <strain>NCTC 10247</strain>
    </source>
</reference>
<feature type="chain" id="PRO_0000380934" description="8-amino-7-oxononanoate synthase">
    <location>
        <begin position="1"/>
        <end position="394"/>
    </location>
</feature>
<feature type="binding site" evidence="1">
    <location>
        <position position="21"/>
    </location>
    <ligand>
        <name>substrate</name>
    </ligand>
</feature>
<feature type="binding site" evidence="1">
    <location>
        <begin position="112"/>
        <end position="113"/>
    </location>
    <ligand>
        <name>pyridoxal 5'-phosphate</name>
        <dbReference type="ChEBI" id="CHEBI:597326"/>
    </ligand>
</feature>
<feature type="binding site" evidence="1">
    <location>
        <position position="137"/>
    </location>
    <ligand>
        <name>substrate</name>
    </ligand>
</feature>
<feature type="binding site" evidence="1">
    <location>
        <position position="183"/>
    </location>
    <ligand>
        <name>pyridoxal 5'-phosphate</name>
        <dbReference type="ChEBI" id="CHEBI:597326"/>
    </ligand>
</feature>
<feature type="binding site" evidence="1">
    <location>
        <position position="211"/>
    </location>
    <ligand>
        <name>pyridoxal 5'-phosphate</name>
        <dbReference type="ChEBI" id="CHEBI:597326"/>
    </ligand>
</feature>
<feature type="binding site" evidence="1">
    <location>
        <position position="239"/>
    </location>
    <ligand>
        <name>pyridoxal 5'-phosphate</name>
        <dbReference type="ChEBI" id="CHEBI:597326"/>
    </ligand>
</feature>
<feature type="binding site" evidence="1">
    <location>
        <position position="358"/>
    </location>
    <ligand>
        <name>substrate</name>
    </ligand>
</feature>
<feature type="modified residue" description="N6-(pyridoxal phosphate)lysine" evidence="1">
    <location>
        <position position="242"/>
    </location>
</feature>
<dbReference type="EC" id="2.3.1.47" evidence="1"/>
<dbReference type="EMBL" id="CP000548">
    <property type="protein sequence ID" value="ABO06735.1"/>
    <property type="molecule type" value="Genomic_DNA"/>
</dbReference>
<dbReference type="RefSeq" id="WP_004189736.1">
    <property type="nucleotide sequence ID" value="NZ_CP007802.1"/>
</dbReference>
<dbReference type="SMR" id="A3MNG3"/>
<dbReference type="GeneID" id="93058884"/>
<dbReference type="KEGG" id="bmaz:BM44_982"/>
<dbReference type="KEGG" id="bmn:BMA10247_2271"/>
<dbReference type="PATRIC" id="fig|320389.8.peg.1091"/>
<dbReference type="UniPathway" id="UPA00078"/>
<dbReference type="GO" id="GO:0008710">
    <property type="term" value="F:8-amino-7-oxononanoate synthase activity"/>
    <property type="evidence" value="ECO:0007669"/>
    <property type="project" value="UniProtKB-UniRule"/>
</dbReference>
<dbReference type="GO" id="GO:0030170">
    <property type="term" value="F:pyridoxal phosphate binding"/>
    <property type="evidence" value="ECO:0007669"/>
    <property type="project" value="UniProtKB-UniRule"/>
</dbReference>
<dbReference type="GO" id="GO:0009102">
    <property type="term" value="P:biotin biosynthetic process"/>
    <property type="evidence" value="ECO:0007669"/>
    <property type="project" value="UniProtKB-UniRule"/>
</dbReference>
<dbReference type="Gene3D" id="3.90.1150.10">
    <property type="entry name" value="Aspartate Aminotransferase, domain 1"/>
    <property type="match status" value="1"/>
</dbReference>
<dbReference type="Gene3D" id="3.40.640.10">
    <property type="entry name" value="Type I PLP-dependent aspartate aminotransferase-like (Major domain)"/>
    <property type="match status" value="1"/>
</dbReference>
<dbReference type="HAMAP" id="MF_01693">
    <property type="entry name" value="BioF_aminotrans_2"/>
    <property type="match status" value="1"/>
</dbReference>
<dbReference type="InterPro" id="IPR004839">
    <property type="entry name" value="Aminotransferase_I/II_large"/>
</dbReference>
<dbReference type="InterPro" id="IPR050087">
    <property type="entry name" value="AON_synthase_class-II"/>
</dbReference>
<dbReference type="InterPro" id="IPR004723">
    <property type="entry name" value="AONS_Archaea/Proteobacteria"/>
</dbReference>
<dbReference type="InterPro" id="IPR022834">
    <property type="entry name" value="AONS_Proteobacteria"/>
</dbReference>
<dbReference type="InterPro" id="IPR015424">
    <property type="entry name" value="PyrdxlP-dep_Trfase"/>
</dbReference>
<dbReference type="InterPro" id="IPR015421">
    <property type="entry name" value="PyrdxlP-dep_Trfase_major"/>
</dbReference>
<dbReference type="InterPro" id="IPR015422">
    <property type="entry name" value="PyrdxlP-dep_Trfase_small"/>
</dbReference>
<dbReference type="NCBIfam" id="TIGR00858">
    <property type="entry name" value="bioF"/>
    <property type="match status" value="1"/>
</dbReference>
<dbReference type="PANTHER" id="PTHR13693:SF100">
    <property type="entry name" value="8-AMINO-7-OXONONANOATE SYNTHASE"/>
    <property type="match status" value="1"/>
</dbReference>
<dbReference type="PANTHER" id="PTHR13693">
    <property type="entry name" value="CLASS II AMINOTRANSFERASE/8-AMINO-7-OXONONANOATE SYNTHASE"/>
    <property type="match status" value="1"/>
</dbReference>
<dbReference type="Pfam" id="PF00155">
    <property type="entry name" value="Aminotran_1_2"/>
    <property type="match status" value="1"/>
</dbReference>
<dbReference type="SUPFAM" id="SSF53383">
    <property type="entry name" value="PLP-dependent transferases"/>
    <property type="match status" value="1"/>
</dbReference>
<evidence type="ECO:0000255" key="1">
    <source>
        <dbReference type="HAMAP-Rule" id="MF_01693"/>
    </source>
</evidence>
<protein>
    <recommendedName>
        <fullName evidence="1">8-amino-7-oxononanoate synthase</fullName>
        <shortName evidence="1">AONS</shortName>
        <ecNumber evidence="1">2.3.1.47</ecNumber>
    </recommendedName>
    <alternativeName>
        <fullName evidence="1">7-keto-8-amino-pelargonic acid synthase</fullName>
        <shortName evidence="1">7-KAP synthase</shortName>
        <shortName evidence="1">KAPA synthase</shortName>
    </alternativeName>
    <alternativeName>
        <fullName evidence="1">8-amino-7-ketopelargonate synthase</fullName>
    </alternativeName>
</protein>
<name>BIOF_BURM7</name>
<comment type="function">
    <text evidence="1">Catalyzes the decarboxylative condensation of pimeloyl-[acyl-carrier protein] and L-alanine to produce 8-amino-7-oxononanoate (AON), [acyl-carrier protein], and carbon dioxide.</text>
</comment>
<comment type="catalytic activity">
    <reaction evidence="1">
        <text>6-carboxyhexanoyl-[ACP] + L-alanine + H(+) = (8S)-8-amino-7-oxononanoate + holo-[ACP] + CO2</text>
        <dbReference type="Rhea" id="RHEA:42288"/>
        <dbReference type="Rhea" id="RHEA-COMP:9685"/>
        <dbReference type="Rhea" id="RHEA-COMP:9955"/>
        <dbReference type="ChEBI" id="CHEBI:15378"/>
        <dbReference type="ChEBI" id="CHEBI:16526"/>
        <dbReference type="ChEBI" id="CHEBI:57972"/>
        <dbReference type="ChEBI" id="CHEBI:64479"/>
        <dbReference type="ChEBI" id="CHEBI:78846"/>
        <dbReference type="ChEBI" id="CHEBI:149468"/>
        <dbReference type="EC" id="2.3.1.47"/>
    </reaction>
</comment>
<comment type="cofactor">
    <cofactor evidence="1">
        <name>pyridoxal 5'-phosphate</name>
        <dbReference type="ChEBI" id="CHEBI:597326"/>
    </cofactor>
</comment>
<comment type="pathway">
    <text evidence="1">Cofactor biosynthesis; biotin biosynthesis.</text>
</comment>
<comment type="subunit">
    <text evidence="1">Homodimer.</text>
</comment>
<comment type="similarity">
    <text evidence="1">Belongs to the class-II pyridoxal-phosphate-dependent aminotransferase family. BioF subfamily.</text>
</comment>
<sequence length="394" mass="40699">MNPLATLEQGLADIDAQGLRRCRRVADTACGAHMTVDGRAIIGFASNDYLGLAAHPRLVEAFAEGARRYGSGSGGSHLLGGHSRAHATLEDELAAFSGGFSDAPRALYFSTGYMANLAALTALAGRGATIFSDALNHASLIDGARLSRANVQIYPHGDADALDARLRACDAPTKLIVSDTVFSMDGDVAPLARLVALAETHGAWLVVDDAHGFGVLGPQGRGALAAHGLRSPNLVYVGTLGKAAGVAGAFVVAHETVIEWLVQRARSYIFTTAAPPSVACAVSASLAVIASDEGDARRAHLGALIKRTRAILRATHWQPVDSHTAVQPLVIGSNEATLAAMAALDAQGLWVPAIRPPTVPAGTSRLRISLSAAHSFDDLARLEAALVTPIGAAA</sequence>
<organism>
    <name type="scientific">Burkholderia mallei (strain NCTC 10247)</name>
    <dbReference type="NCBI Taxonomy" id="320389"/>
    <lineage>
        <taxon>Bacteria</taxon>
        <taxon>Pseudomonadati</taxon>
        <taxon>Pseudomonadota</taxon>
        <taxon>Betaproteobacteria</taxon>
        <taxon>Burkholderiales</taxon>
        <taxon>Burkholderiaceae</taxon>
        <taxon>Burkholderia</taxon>
        <taxon>pseudomallei group</taxon>
    </lineage>
</organism>
<keyword id="KW-0093">Biotin biosynthesis</keyword>
<keyword id="KW-0663">Pyridoxal phosphate</keyword>
<keyword id="KW-0808">Transferase</keyword>
<accession>A3MNG3</accession>